<keyword id="KW-1185">Reference proteome</keyword>
<keyword id="KW-0687">Ribonucleoprotein</keyword>
<keyword id="KW-0689">Ribosomal protein</keyword>
<keyword id="KW-0694">RNA-binding</keyword>
<keyword id="KW-0699">rRNA-binding</keyword>
<gene>
    <name evidence="1" type="primary">rpsR</name>
    <name type="ordered locus">SSON_4385</name>
</gene>
<reference key="1">
    <citation type="journal article" date="2005" name="Nucleic Acids Res.">
        <title>Genome dynamics and diversity of Shigella species, the etiologic agents of bacillary dysentery.</title>
        <authorList>
            <person name="Yang F."/>
            <person name="Yang J."/>
            <person name="Zhang X."/>
            <person name="Chen L."/>
            <person name="Jiang Y."/>
            <person name="Yan Y."/>
            <person name="Tang X."/>
            <person name="Wang J."/>
            <person name="Xiong Z."/>
            <person name="Dong J."/>
            <person name="Xue Y."/>
            <person name="Zhu Y."/>
            <person name="Xu X."/>
            <person name="Sun L."/>
            <person name="Chen S."/>
            <person name="Nie H."/>
            <person name="Peng J."/>
            <person name="Xu J."/>
            <person name="Wang Y."/>
            <person name="Yuan Z."/>
            <person name="Wen Y."/>
            <person name="Yao Z."/>
            <person name="Shen Y."/>
            <person name="Qiang B."/>
            <person name="Hou Y."/>
            <person name="Yu J."/>
            <person name="Jin Q."/>
        </authorList>
    </citation>
    <scope>NUCLEOTIDE SEQUENCE [LARGE SCALE GENOMIC DNA]</scope>
    <source>
        <strain>Ss046</strain>
    </source>
</reference>
<accession>Q3YUE5</accession>
<comment type="function">
    <text evidence="1">Binds as a heterodimer with protein bS6 to the central domain of the 16S rRNA, where it helps stabilize the platform of the 30S subunit.</text>
</comment>
<comment type="subunit">
    <text evidence="1">Part of the 30S ribosomal subunit. Forms a tight heterodimer with protein bS6.</text>
</comment>
<comment type="similarity">
    <text evidence="1">Belongs to the bacterial ribosomal protein bS18 family.</text>
</comment>
<evidence type="ECO:0000255" key="1">
    <source>
        <dbReference type="HAMAP-Rule" id="MF_00270"/>
    </source>
</evidence>
<evidence type="ECO:0000305" key="2"/>
<protein>
    <recommendedName>
        <fullName evidence="1">Small ribosomal subunit protein bS18</fullName>
    </recommendedName>
    <alternativeName>
        <fullName evidence="2">30S ribosomal protein S18</fullName>
    </alternativeName>
</protein>
<organism>
    <name type="scientific">Shigella sonnei (strain Ss046)</name>
    <dbReference type="NCBI Taxonomy" id="300269"/>
    <lineage>
        <taxon>Bacteria</taxon>
        <taxon>Pseudomonadati</taxon>
        <taxon>Pseudomonadota</taxon>
        <taxon>Gammaproteobacteria</taxon>
        <taxon>Enterobacterales</taxon>
        <taxon>Enterobacteriaceae</taxon>
        <taxon>Shigella</taxon>
    </lineage>
</organism>
<proteinExistence type="inferred from homology"/>
<sequence length="75" mass="8986">MARYFRRRKFCRFTAEGVQEIDYKDIATLKNYITESGKIVPSRITGTRAKYQRQLARAIKRARYLSLLPYTDRHQ</sequence>
<dbReference type="EMBL" id="CP000038">
    <property type="protein sequence ID" value="AAZ90867.1"/>
    <property type="molecule type" value="Genomic_DNA"/>
</dbReference>
<dbReference type="RefSeq" id="WP_000135199.1">
    <property type="nucleotide sequence ID" value="NC_007384.1"/>
</dbReference>
<dbReference type="SMR" id="Q3YUE5"/>
<dbReference type="GeneID" id="98186237"/>
<dbReference type="KEGG" id="ssn:SSON_4385"/>
<dbReference type="HOGENOM" id="CLU_148710_2_3_6"/>
<dbReference type="Proteomes" id="UP000002529">
    <property type="component" value="Chromosome"/>
</dbReference>
<dbReference type="GO" id="GO:0022627">
    <property type="term" value="C:cytosolic small ribosomal subunit"/>
    <property type="evidence" value="ECO:0007669"/>
    <property type="project" value="TreeGrafter"/>
</dbReference>
<dbReference type="GO" id="GO:0070181">
    <property type="term" value="F:small ribosomal subunit rRNA binding"/>
    <property type="evidence" value="ECO:0007669"/>
    <property type="project" value="TreeGrafter"/>
</dbReference>
<dbReference type="GO" id="GO:0003735">
    <property type="term" value="F:structural constituent of ribosome"/>
    <property type="evidence" value="ECO:0007669"/>
    <property type="project" value="InterPro"/>
</dbReference>
<dbReference type="GO" id="GO:0006412">
    <property type="term" value="P:translation"/>
    <property type="evidence" value="ECO:0007669"/>
    <property type="project" value="UniProtKB-UniRule"/>
</dbReference>
<dbReference type="FunFam" id="4.10.640.10:FF:000001">
    <property type="entry name" value="30S ribosomal protein S18"/>
    <property type="match status" value="1"/>
</dbReference>
<dbReference type="Gene3D" id="4.10.640.10">
    <property type="entry name" value="Ribosomal protein S18"/>
    <property type="match status" value="1"/>
</dbReference>
<dbReference type="HAMAP" id="MF_00270">
    <property type="entry name" value="Ribosomal_bS18"/>
    <property type="match status" value="1"/>
</dbReference>
<dbReference type="InterPro" id="IPR001648">
    <property type="entry name" value="Ribosomal_bS18"/>
</dbReference>
<dbReference type="InterPro" id="IPR018275">
    <property type="entry name" value="Ribosomal_bS18_CS"/>
</dbReference>
<dbReference type="InterPro" id="IPR036870">
    <property type="entry name" value="Ribosomal_bS18_sf"/>
</dbReference>
<dbReference type="NCBIfam" id="TIGR00165">
    <property type="entry name" value="S18"/>
    <property type="match status" value="1"/>
</dbReference>
<dbReference type="PANTHER" id="PTHR13479">
    <property type="entry name" value="30S RIBOSOMAL PROTEIN S18"/>
    <property type="match status" value="1"/>
</dbReference>
<dbReference type="PANTHER" id="PTHR13479:SF40">
    <property type="entry name" value="SMALL RIBOSOMAL SUBUNIT PROTEIN BS18M"/>
    <property type="match status" value="1"/>
</dbReference>
<dbReference type="Pfam" id="PF01084">
    <property type="entry name" value="Ribosomal_S18"/>
    <property type="match status" value="1"/>
</dbReference>
<dbReference type="PRINTS" id="PR00974">
    <property type="entry name" value="RIBOSOMALS18"/>
</dbReference>
<dbReference type="SUPFAM" id="SSF46911">
    <property type="entry name" value="Ribosomal protein S18"/>
    <property type="match status" value="1"/>
</dbReference>
<dbReference type="PROSITE" id="PS00057">
    <property type="entry name" value="RIBOSOMAL_S18"/>
    <property type="match status" value="1"/>
</dbReference>
<feature type="chain" id="PRO_1000003613" description="Small ribosomal subunit protein bS18">
    <location>
        <begin position="1"/>
        <end position="75"/>
    </location>
</feature>
<name>RS18_SHISS</name>